<sequence>MRVLVASRNKKKLAELNRMLEAANVTGIELVGLGDLPEYPETPETGATFVDNARIKTNDGVRHTGLPTIADDSGLAVDALNGMPGVLSARWSGGHGDDKANNDLLLAQMGDVPDERRGAHFVSSCVLQLPAQVAAERGMETEYAVEGRWYGRVLRAEQGEGGFGYDPLFAPDELPEGQEEQLAGKSAGELTAEQKDAVSHRGKALRQLVEILAQLAD</sequence>
<dbReference type="EC" id="3.6.1.66" evidence="1"/>
<dbReference type="EMBL" id="CR931997">
    <property type="protein sequence ID" value="CAI36656.1"/>
    <property type="molecule type" value="Genomic_DNA"/>
</dbReference>
<dbReference type="RefSeq" id="WP_011273172.1">
    <property type="nucleotide sequence ID" value="NC_007164.1"/>
</dbReference>
<dbReference type="SMR" id="Q4JX01"/>
<dbReference type="STRING" id="306537.jk0499"/>
<dbReference type="KEGG" id="cjk:jk0499"/>
<dbReference type="PATRIC" id="fig|306537.10.peg.511"/>
<dbReference type="eggNOG" id="COG0127">
    <property type="taxonomic scope" value="Bacteria"/>
</dbReference>
<dbReference type="HOGENOM" id="CLU_082080_0_1_11"/>
<dbReference type="OrthoDB" id="9807456at2"/>
<dbReference type="Proteomes" id="UP000000545">
    <property type="component" value="Chromosome"/>
</dbReference>
<dbReference type="GO" id="GO:0005829">
    <property type="term" value="C:cytosol"/>
    <property type="evidence" value="ECO:0007669"/>
    <property type="project" value="TreeGrafter"/>
</dbReference>
<dbReference type="GO" id="GO:0035870">
    <property type="term" value="F:dITP diphosphatase activity"/>
    <property type="evidence" value="ECO:0007669"/>
    <property type="project" value="RHEA"/>
</dbReference>
<dbReference type="GO" id="GO:0036220">
    <property type="term" value="F:ITP diphosphatase activity"/>
    <property type="evidence" value="ECO:0007669"/>
    <property type="project" value="UniProtKB-EC"/>
</dbReference>
<dbReference type="GO" id="GO:0046872">
    <property type="term" value="F:metal ion binding"/>
    <property type="evidence" value="ECO:0007669"/>
    <property type="project" value="UniProtKB-KW"/>
</dbReference>
<dbReference type="GO" id="GO:0000166">
    <property type="term" value="F:nucleotide binding"/>
    <property type="evidence" value="ECO:0007669"/>
    <property type="project" value="UniProtKB-KW"/>
</dbReference>
<dbReference type="GO" id="GO:0017111">
    <property type="term" value="F:ribonucleoside triphosphate phosphatase activity"/>
    <property type="evidence" value="ECO:0007669"/>
    <property type="project" value="InterPro"/>
</dbReference>
<dbReference type="GO" id="GO:0036222">
    <property type="term" value="F:XTP diphosphatase activity"/>
    <property type="evidence" value="ECO:0007669"/>
    <property type="project" value="RHEA"/>
</dbReference>
<dbReference type="GO" id="GO:0009117">
    <property type="term" value="P:nucleotide metabolic process"/>
    <property type="evidence" value="ECO:0007669"/>
    <property type="project" value="UniProtKB-KW"/>
</dbReference>
<dbReference type="GO" id="GO:0009146">
    <property type="term" value="P:purine nucleoside triphosphate catabolic process"/>
    <property type="evidence" value="ECO:0007669"/>
    <property type="project" value="UniProtKB-UniRule"/>
</dbReference>
<dbReference type="CDD" id="cd00515">
    <property type="entry name" value="HAM1"/>
    <property type="match status" value="1"/>
</dbReference>
<dbReference type="FunFam" id="3.90.950.10:FF:000001">
    <property type="entry name" value="dITP/XTP pyrophosphatase"/>
    <property type="match status" value="1"/>
</dbReference>
<dbReference type="Gene3D" id="3.90.950.10">
    <property type="match status" value="1"/>
</dbReference>
<dbReference type="HAMAP" id="MF_01405">
    <property type="entry name" value="Non_canon_purine_NTPase"/>
    <property type="match status" value="1"/>
</dbReference>
<dbReference type="InterPro" id="IPR020922">
    <property type="entry name" value="dITP/XTP_pyrophosphatase"/>
</dbReference>
<dbReference type="InterPro" id="IPR029001">
    <property type="entry name" value="ITPase-like_fam"/>
</dbReference>
<dbReference type="InterPro" id="IPR002637">
    <property type="entry name" value="RdgB/HAM1"/>
</dbReference>
<dbReference type="PANTHER" id="PTHR11067:SF9">
    <property type="entry name" value="INOSINE TRIPHOSPHATE PYROPHOSPHATASE"/>
    <property type="match status" value="1"/>
</dbReference>
<dbReference type="PANTHER" id="PTHR11067">
    <property type="entry name" value="INOSINE TRIPHOSPHATE PYROPHOSPHATASE/HAM1 PROTEIN"/>
    <property type="match status" value="1"/>
</dbReference>
<dbReference type="Pfam" id="PF01725">
    <property type="entry name" value="Ham1p_like"/>
    <property type="match status" value="1"/>
</dbReference>
<dbReference type="SUPFAM" id="SSF52972">
    <property type="entry name" value="ITPase-like"/>
    <property type="match status" value="1"/>
</dbReference>
<organism>
    <name type="scientific">Corynebacterium jeikeium (strain K411)</name>
    <dbReference type="NCBI Taxonomy" id="306537"/>
    <lineage>
        <taxon>Bacteria</taxon>
        <taxon>Bacillati</taxon>
        <taxon>Actinomycetota</taxon>
        <taxon>Actinomycetes</taxon>
        <taxon>Mycobacteriales</taxon>
        <taxon>Corynebacteriaceae</taxon>
        <taxon>Corynebacterium</taxon>
    </lineage>
</organism>
<gene>
    <name type="ordered locus">jk0499</name>
</gene>
<proteinExistence type="inferred from homology"/>
<keyword id="KW-0378">Hydrolase</keyword>
<keyword id="KW-0460">Magnesium</keyword>
<keyword id="KW-0479">Metal-binding</keyword>
<keyword id="KW-0546">Nucleotide metabolism</keyword>
<keyword id="KW-0547">Nucleotide-binding</keyword>
<keyword id="KW-1185">Reference proteome</keyword>
<accession>Q4JX01</accession>
<protein>
    <recommendedName>
        <fullName evidence="1">dITP/XTP pyrophosphatase</fullName>
        <ecNumber evidence="1">3.6.1.66</ecNumber>
    </recommendedName>
    <alternativeName>
        <fullName evidence="1">Non-canonical purine NTP pyrophosphatase</fullName>
    </alternativeName>
    <alternativeName>
        <fullName evidence="1">Non-standard purine NTP pyrophosphatase</fullName>
    </alternativeName>
    <alternativeName>
        <fullName evidence="1">Nucleoside-triphosphate diphosphatase</fullName>
    </alternativeName>
    <alternativeName>
        <fullName evidence="1">Nucleoside-triphosphate pyrophosphatase</fullName>
        <shortName evidence="1">NTPase</shortName>
    </alternativeName>
</protein>
<name>IXTPA_CORJK</name>
<reference key="1">
    <citation type="journal article" date="2005" name="J. Bacteriol.">
        <title>Complete genome sequence and analysis of the multiresistant nosocomial pathogen Corynebacterium jeikeium K411, a lipid-requiring bacterium of the human skin flora.</title>
        <authorList>
            <person name="Tauch A."/>
            <person name="Kaiser O."/>
            <person name="Hain T."/>
            <person name="Goesmann A."/>
            <person name="Weisshaar B."/>
            <person name="Albersmeier A."/>
            <person name="Bekel T."/>
            <person name="Bischoff N."/>
            <person name="Brune I."/>
            <person name="Chakraborty T."/>
            <person name="Kalinowski J."/>
            <person name="Meyer F."/>
            <person name="Rupp O."/>
            <person name="Schneiker S."/>
            <person name="Viehoever P."/>
            <person name="Puehler A."/>
        </authorList>
    </citation>
    <scope>NUCLEOTIDE SEQUENCE [LARGE SCALE GENOMIC DNA]</scope>
    <source>
        <strain>K411</strain>
    </source>
</reference>
<evidence type="ECO:0000255" key="1">
    <source>
        <dbReference type="HAMAP-Rule" id="MF_01405"/>
    </source>
</evidence>
<comment type="function">
    <text evidence="1">Pyrophosphatase that catalyzes the hydrolysis of nucleoside triphosphates to their monophosphate derivatives, with a high preference for the non-canonical purine nucleotides XTP (xanthosine triphosphate), dITP (deoxyinosine triphosphate) and ITP. Seems to function as a house-cleaning enzyme that removes non-canonical purine nucleotides from the nucleotide pool, thus preventing their incorporation into DNA/RNA and avoiding chromosomal lesions.</text>
</comment>
<comment type="catalytic activity">
    <reaction evidence="1">
        <text>XTP + H2O = XMP + diphosphate + H(+)</text>
        <dbReference type="Rhea" id="RHEA:28610"/>
        <dbReference type="ChEBI" id="CHEBI:15377"/>
        <dbReference type="ChEBI" id="CHEBI:15378"/>
        <dbReference type="ChEBI" id="CHEBI:33019"/>
        <dbReference type="ChEBI" id="CHEBI:57464"/>
        <dbReference type="ChEBI" id="CHEBI:61314"/>
        <dbReference type="EC" id="3.6.1.66"/>
    </reaction>
</comment>
<comment type="catalytic activity">
    <reaction evidence="1">
        <text>dITP + H2O = dIMP + diphosphate + H(+)</text>
        <dbReference type="Rhea" id="RHEA:28342"/>
        <dbReference type="ChEBI" id="CHEBI:15377"/>
        <dbReference type="ChEBI" id="CHEBI:15378"/>
        <dbReference type="ChEBI" id="CHEBI:33019"/>
        <dbReference type="ChEBI" id="CHEBI:61194"/>
        <dbReference type="ChEBI" id="CHEBI:61382"/>
        <dbReference type="EC" id="3.6.1.66"/>
    </reaction>
</comment>
<comment type="catalytic activity">
    <reaction evidence="1">
        <text>ITP + H2O = IMP + diphosphate + H(+)</text>
        <dbReference type="Rhea" id="RHEA:29399"/>
        <dbReference type="ChEBI" id="CHEBI:15377"/>
        <dbReference type="ChEBI" id="CHEBI:15378"/>
        <dbReference type="ChEBI" id="CHEBI:33019"/>
        <dbReference type="ChEBI" id="CHEBI:58053"/>
        <dbReference type="ChEBI" id="CHEBI:61402"/>
        <dbReference type="EC" id="3.6.1.66"/>
    </reaction>
</comment>
<comment type="cofactor">
    <cofactor evidence="1">
        <name>Mg(2+)</name>
        <dbReference type="ChEBI" id="CHEBI:18420"/>
    </cofactor>
    <text evidence="1">Binds 1 Mg(2+) ion per subunit.</text>
</comment>
<comment type="subunit">
    <text evidence="1">Homodimer.</text>
</comment>
<comment type="similarity">
    <text evidence="1">Belongs to the HAM1 NTPase family.</text>
</comment>
<feature type="chain" id="PRO_1000068419" description="dITP/XTP pyrophosphatase">
    <location>
        <begin position="1"/>
        <end position="217"/>
    </location>
</feature>
<feature type="active site" description="Proton acceptor" evidence="1">
    <location>
        <position position="72"/>
    </location>
</feature>
<feature type="binding site" evidence="1">
    <location>
        <begin position="7"/>
        <end position="12"/>
    </location>
    <ligand>
        <name>substrate</name>
    </ligand>
</feature>
<feature type="binding site" evidence="1">
    <location>
        <position position="72"/>
    </location>
    <ligand>
        <name>Mg(2+)</name>
        <dbReference type="ChEBI" id="CHEBI:18420"/>
    </ligand>
</feature>
<feature type="binding site" evidence="1">
    <location>
        <position position="73"/>
    </location>
    <ligand>
        <name>substrate</name>
    </ligand>
</feature>
<feature type="binding site" evidence="1">
    <location>
        <begin position="163"/>
        <end position="166"/>
    </location>
    <ligand>
        <name>substrate</name>
    </ligand>
</feature>
<feature type="binding site" evidence="1">
    <location>
        <position position="195"/>
    </location>
    <ligand>
        <name>substrate</name>
    </ligand>
</feature>
<feature type="binding site" evidence="1">
    <location>
        <begin position="200"/>
        <end position="201"/>
    </location>
    <ligand>
        <name>substrate</name>
    </ligand>
</feature>